<proteinExistence type="inferred from homology"/>
<keyword id="KW-0998">Cell outer membrane</keyword>
<keyword id="KW-0449">Lipoprotein</keyword>
<keyword id="KW-0472">Membrane</keyword>
<keyword id="KW-0564">Palmitate</keyword>
<keyword id="KW-1185">Reference proteome</keyword>
<keyword id="KW-0732">Signal</keyword>
<name>BAME_XANCP</name>
<comment type="function">
    <text evidence="1">Part of the outer membrane protein assembly complex, which is involved in assembly and insertion of beta-barrel proteins into the outer membrane.</text>
</comment>
<comment type="subunit">
    <text evidence="1">Part of the Bam complex.</text>
</comment>
<comment type="subcellular location">
    <subcellularLocation>
        <location evidence="1">Cell outer membrane</location>
        <topology evidence="1">Lipid-anchor</topology>
    </subcellularLocation>
</comment>
<comment type="similarity">
    <text evidence="1">Belongs to the BamE family.</text>
</comment>
<accession>Q8PAL4</accession>
<evidence type="ECO:0000255" key="1">
    <source>
        <dbReference type="HAMAP-Rule" id="MF_00925"/>
    </source>
</evidence>
<evidence type="ECO:0000256" key="2">
    <source>
        <dbReference type="SAM" id="MobiDB-lite"/>
    </source>
</evidence>
<dbReference type="EMBL" id="AE008922">
    <property type="protein sequence ID" value="AAM40765.1"/>
    <property type="molecule type" value="Genomic_DNA"/>
</dbReference>
<dbReference type="RefSeq" id="NP_636841.1">
    <property type="nucleotide sequence ID" value="NC_003902.1"/>
</dbReference>
<dbReference type="RefSeq" id="WP_011036655.1">
    <property type="nucleotide sequence ID" value="NC_003902.1"/>
</dbReference>
<dbReference type="SMR" id="Q8PAL4"/>
<dbReference type="STRING" id="190485.XCC1469"/>
<dbReference type="EnsemblBacteria" id="AAM40765">
    <property type="protein sequence ID" value="AAM40765"/>
    <property type="gene ID" value="XCC1469"/>
</dbReference>
<dbReference type="KEGG" id="xcc:XCC1469"/>
<dbReference type="PATRIC" id="fig|190485.4.peg.1573"/>
<dbReference type="eggNOG" id="COG2913">
    <property type="taxonomic scope" value="Bacteria"/>
</dbReference>
<dbReference type="HOGENOM" id="CLU_083835_3_1_6"/>
<dbReference type="OrthoDB" id="9808250at2"/>
<dbReference type="Proteomes" id="UP000001010">
    <property type="component" value="Chromosome"/>
</dbReference>
<dbReference type="GO" id="GO:1990063">
    <property type="term" value="C:Bam protein complex"/>
    <property type="evidence" value="ECO:0000318"/>
    <property type="project" value="GO_Central"/>
</dbReference>
<dbReference type="GO" id="GO:0030674">
    <property type="term" value="F:protein-macromolecule adaptor activity"/>
    <property type="evidence" value="ECO:0000318"/>
    <property type="project" value="GO_Central"/>
</dbReference>
<dbReference type="GO" id="GO:0043165">
    <property type="term" value="P:Gram-negative-bacterium-type cell outer membrane assembly"/>
    <property type="evidence" value="ECO:0000318"/>
    <property type="project" value="GO_Central"/>
</dbReference>
<dbReference type="GO" id="GO:0051205">
    <property type="term" value="P:protein insertion into membrane"/>
    <property type="evidence" value="ECO:0000318"/>
    <property type="project" value="GO_Central"/>
</dbReference>
<dbReference type="FunFam" id="3.30.1450.10:FF:000004">
    <property type="entry name" value="Outer membrane protein assembly factor BamE"/>
    <property type="match status" value="1"/>
</dbReference>
<dbReference type="Gene3D" id="3.30.1450.10">
    <property type="match status" value="1"/>
</dbReference>
<dbReference type="HAMAP" id="MF_00925">
    <property type="entry name" value="OM_assembly_BamE"/>
    <property type="match status" value="1"/>
</dbReference>
<dbReference type="InterPro" id="IPR026592">
    <property type="entry name" value="BamE"/>
</dbReference>
<dbReference type="InterPro" id="IPR037873">
    <property type="entry name" value="BamE-like"/>
</dbReference>
<dbReference type="InterPro" id="IPR007450">
    <property type="entry name" value="BamE_dom"/>
</dbReference>
<dbReference type="PANTHER" id="PTHR37482">
    <property type="entry name" value="OUTER MEMBRANE PROTEIN ASSEMBLY FACTOR BAME"/>
    <property type="match status" value="1"/>
</dbReference>
<dbReference type="PANTHER" id="PTHR37482:SF1">
    <property type="entry name" value="OUTER MEMBRANE PROTEIN ASSEMBLY FACTOR BAME"/>
    <property type="match status" value="1"/>
</dbReference>
<dbReference type="Pfam" id="PF04355">
    <property type="entry name" value="BamE"/>
    <property type="match status" value="1"/>
</dbReference>
<dbReference type="PROSITE" id="PS51257">
    <property type="entry name" value="PROKAR_LIPOPROTEIN"/>
    <property type="match status" value="1"/>
</dbReference>
<gene>
    <name evidence="1" type="primary">bamE</name>
    <name type="synonym">smpA</name>
    <name type="ordered locus">XCC1469</name>
</gene>
<feature type="signal peptide" evidence="1">
    <location>
        <begin position="1"/>
        <end position="16"/>
    </location>
</feature>
<feature type="chain" id="PRO_0000417872" description="Outer membrane protein assembly factor BamE">
    <location>
        <begin position="17"/>
        <end position="131"/>
    </location>
</feature>
<feature type="region of interest" description="Disordered" evidence="2">
    <location>
        <begin position="112"/>
        <end position="131"/>
    </location>
</feature>
<feature type="lipid moiety-binding region" description="N-palmitoyl cysteine" evidence="1">
    <location>
        <position position="17"/>
    </location>
</feature>
<feature type="lipid moiety-binding region" description="S-diacylglycerol cysteine" evidence="1">
    <location>
        <position position="17"/>
    </location>
</feature>
<protein>
    <recommendedName>
        <fullName evidence="1">Outer membrane protein assembly factor BamE</fullName>
    </recommendedName>
</protein>
<sequence>MRNLLLVAAVALSTAGCGIIYKQPIYQGNLIKQTAVEQLQVGQSKQQVSALLGTPSIPDPFHAQRWDYTSTQRVDRLARTDVKNFTVFFENEQVVRWEGDYFPAQDEQLAKSAPKQFGRNLARDKKKQRGR</sequence>
<reference key="1">
    <citation type="journal article" date="2002" name="Nature">
        <title>Comparison of the genomes of two Xanthomonas pathogens with differing host specificities.</title>
        <authorList>
            <person name="da Silva A.C.R."/>
            <person name="Ferro J.A."/>
            <person name="Reinach F.C."/>
            <person name="Farah C.S."/>
            <person name="Furlan L.R."/>
            <person name="Quaggio R.B."/>
            <person name="Monteiro-Vitorello C.B."/>
            <person name="Van Sluys M.A."/>
            <person name="Almeida N.F. Jr."/>
            <person name="Alves L.M.C."/>
            <person name="do Amaral A.M."/>
            <person name="Bertolini M.C."/>
            <person name="Camargo L.E.A."/>
            <person name="Camarotte G."/>
            <person name="Cannavan F."/>
            <person name="Cardozo J."/>
            <person name="Chambergo F."/>
            <person name="Ciapina L.P."/>
            <person name="Cicarelli R.M.B."/>
            <person name="Coutinho L.L."/>
            <person name="Cursino-Santos J.R."/>
            <person name="El-Dorry H."/>
            <person name="Faria J.B."/>
            <person name="Ferreira A.J.S."/>
            <person name="Ferreira R.C.C."/>
            <person name="Ferro M.I.T."/>
            <person name="Formighieri E.F."/>
            <person name="Franco M.C."/>
            <person name="Greggio C.C."/>
            <person name="Gruber A."/>
            <person name="Katsuyama A.M."/>
            <person name="Kishi L.T."/>
            <person name="Leite R.P."/>
            <person name="Lemos E.G.M."/>
            <person name="Lemos M.V.F."/>
            <person name="Locali E.C."/>
            <person name="Machado M.A."/>
            <person name="Madeira A.M.B.N."/>
            <person name="Martinez-Rossi N.M."/>
            <person name="Martins E.C."/>
            <person name="Meidanis J."/>
            <person name="Menck C.F.M."/>
            <person name="Miyaki C.Y."/>
            <person name="Moon D.H."/>
            <person name="Moreira L.M."/>
            <person name="Novo M.T.M."/>
            <person name="Okura V.K."/>
            <person name="Oliveira M.C."/>
            <person name="Oliveira V.R."/>
            <person name="Pereira H.A."/>
            <person name="Rossi A."/>
            <person name="Sena J.A.D."/>
            <person name="Silva C."/>
            <person name="de Souza R.F."/>
            <person name="Spinola L.A.F."/>
            <person name="Takita M.A."/>
            <person name="Tamura R.E."/>
            <person name="Teixeira E.C."/>
            <person name="Tezza R.I.D."/>
            <person name="Trindade dos Santos M."/>
            <person name="Truffi D."/>
            <person name="Tsai S.M."/>
            <person name="White F.F."/>
            <person name="Setubal J.C."/>
            <person name="Kitajima J.P."/>
        </authorList>
    </citation>
    <scope>NUCLEOTIDE SEQUENCE [LARGE SCALE GENOMIC DNA]</scope>
    <source>
        <strain>ATCC 33913 / DSM 3586 / NCPPB 528 / LMG 568 / P 25</strain>
    </source>
</reference>
<organism>
    <name type="scientific">Xanthomonas campestris pv. campestris (strain ATCC 33913 / DSM 3586 / NCPPB 528 / LMG 568 / P 25)</name>
    <dbReference type="NCBI Taxonomy" id="190485"/>
    <lineage>
        <taxon>Bacteria</taxon>
        <taxon>Pseudomonadati</taxon>
        <taxon>Pseudomonadota</taxon>
        <taxon>Gammaproteobacteria</taxon>
        <taxon>Lysobacterales</taxon>
        <taxon>Lysobacteraceae</taxon>
        <taxon>Xanthomonas</taxon>
    </lineage>
</organism>